<proteinExistence type="evidence at protein level"/>
<sequence length="367" mass="41452">MVKETHRFETFTEEPIRLIGEEGEWLGDFPLDLEGEKLRRLYRDMLAARMLDERYTILIRTGKTSFIAPAAGHEAAQVAIAHAIRPGFDWVFPYYRDHGLALALGIPLKELLGQMLATKADPNKGRQMPEHPGSKALNFFTVASPIASHVPPAAGAAISMKLLRTGQVAVCTFGDGATSEGDWYAGINFAAVQGAPAVFIAENNFYAISVDYRHQTHSPTIADKAHAFGIPGYLVDGMDVLASYYVVKEAVERARRGEGPSLVELRVYRYGPHSSADDDSRYRPKEEVAFWRKKDPIPRFRRFLEARGLWNEEWEEDVREEIRAELERGLKEAEEAGPVPPEWMFEDVFAEKPWHLLRQEALLKEEL</sequence>
<reference evidence="4" key="1">
    <citation type="submission" date="2004-11" db="EMBL/GenBank/DDBJ databases">
        <title>Complete genome sequence of Thermus thermophilus HB8.</title>
        <authorList>
            <person name="Masui R."/>
            <person name="Kurokawa K."/>
            <person name="Nakagawa N."/>
            <person name="Tokunaga F."/>
            <person name="Koyama Y."/>
            <person name="Shibata T."/>
            <person name="Oshima T."/>
            <person name="Yokoyama S."/>
            <person name="Yasunaga T."/>
            <person name="Kuramitsu S."/>
        </authorList>
    </citation>
    <scope>NUCLEOTIDE SEQUENCE [LARGE SCALE GENOMIC DNA]</scope>
    <source>
        <strain>ATCC 27634 / DSM 579 / HB8</strain>
    </source>
</reference>
<reference evidence="3 5" key="2">
    <citation type="journal article" date="2004" name="J. Mol. Biol.">
        <title>Ligand-induced conformational changes and a reaction intermediate in branched-chain 2-oxo acid dehydrogenase (E1) from Thermus thermophilus HB8, as revealed by X-ray crystallography.</title>
        <authorList>
            <person name="Nakai T."/>
            <person name="Nakagawa N."/>
            <person name="Maoka N."/>
            <person name="Masui R."/>
            <person name="Kuramitsu S."/>
            <person name="Kamiya N."/>
        </authorList>
    </citation>
    <scope>X-RAY CRYSTALLOGRAPHY (1.9 ANGSTROMS) IN COMPLEX WITH ODBB AND THIAMINE PYROPHOSPHATE</scope>
    <scope>CATALYTIC ACTIVITY</scope>
    <scope>COFACTOR</scope>
    <scope>SUBUNIT</scope>
</reference>
<gene>
    <name type="ordered locus">TTHA0229</name>
</gene>
<evidence type="ECO:0000250" key="1">
    <source>
        <dbReference type="UniProtKB" id="P37940"/>
    </source>
</evidence>
<evidence type="ECO:0000269" key="2">
    <source>
    </source>
</evidence>
<evidence type="ECO:0000305" key="3"/>
<evidence type="ECO:0000312" key="4">
    <source>
        <dbReference type="EMBL" id="BAD70052.1"/>
    </source>
</evidence>
<evidence type="ECO:0000312" key="5">
    <source>
        <dbReference type="PDB" id="1UM9"/>
    </source>
</evidence>
<evidence type="ECO:0007829" key="6">
    <source>
        <dbReference type="PDB" id="1UMD"/>
    </source>
</evidence>
<protein>
    <recommendedName>
        <fullName>2-oxoisovalerate dehydrogenase subunit alpha</fullName>
        <ecNumber>1.2.4.4</ecNumber>
    </recommendedName>
    <alternativeName>
        <fullName>Branched-chain alpha-keto acid dehydrogenase E1 component alpha chain</fullName>
        <shortName>BCKDH E1-alpha</shortName>
    </alternativeName>
</protein>
<accession>Q5SLR4</accession>
<accession>P84129</accession>
<keyword id="KW-0002">3D-structure</keyword>
<keyword id="KW-0460">Magnesium</keyword>
<keyword id="KW-0479">Metal-binding</keyword>
<keyword id="KW-0560">Oxidoreductase</keyword>
<keyword id="KW-1185">Reference proteome</keyword>
<keyword id="KW-0786">Thiamine pyrophosphate</keyword>
<organism>
    <name type="scientific">Thermus thermophilus (strain ATCC 27634 / DSM 579 / HB8)</name>
    <dbReference type="NCBI Taxonomy" id="300852"/>
    <lineage>
        <taxon>Bacteria</taxon>
        <taxon>Thermotogati</taxon>
        <taxon>Deinococcota</taxon>
        <taxon>Deinococci</taxon>
        <taxon>Thermales</taxon>
        <taxon>Thermaceae</taxon>
        <taxon>Thermus</taxon>
    </lineage>
</organism>
<name>ODBA_THET8</name>
<dbReference type="EC" id="1.2.4.4"/>
<dbReference type="EMBL" id="AP008226">
    <property type="protein sequence ID" value="BAD70052.1"/>
    <property type="molecule type" value="Genomic_DNA"/>
</dbReference>
<dbReference type="RefSeq" id="WP_011227793.1">
    <property type="nucleotide sequence ID" value="NC_006461.1"/>
</dbReference>
<dbReference type="RefSeq" id="YP_143495.1">
    <property type="nucleotide sequence ID" value="NC_006461.1"/>
</dbReference>
<dbReference type="PDB" id="1UM9">
    <property type="method" value="X-ray"/>
    <property type="resolution" value="2.20 A"/>
    <property type="chains" value="A/C=1-367"/>
</dbReference>
<dbReference type="PDB" id="1UMB">
    <property type="method" value="X-ray"/>
    <property type="resolution" value="2.10 A"/>
    <property type="chains" value="A/C=1-367"/>
</dbReference>
<dbReference type="PDB" id="1UMC">
    <property type="method" value="X-ray"/>
    <property type="resolution" value="2.40 A"/>
    <property type="chains" value="A/C=1-367"/>
</dbReference>
<dbReference type="PDB" id="1UMD">
    <property type="method" value="X-ray"/>
    <property type="resolution" value="1.90 A"/>
    <property type="chains" value="A/C=1-367"/>
</dbReference>
<dbReference type="PDBsum" id="1UM9"/>
<dbReference type="PDBsum" id="1UMB"/>
<dbReference type="PDBsum" id="1UMC"/>
<dbReference type="PDBsum" id="1UMD"/>
<dbReference type="SMR" id="Q5SLR4"/>
<dbReference type="IntAct" id="Q5SLR4">
    <property type="interactions" value="1"/>
</dbReference>
<dbReference type="EnsemblBacteria" id="BAD70052">
    <property type="protein sequence ID" value="BAD70052"/>
    <property type="gene ID" value="BAD70052"/>
</dbReference>
<dbReference type="GeneID" id="3168003"/>
<dbReference type="KEGG" id="ttj:TTHA0229"/>
<dbReference type="PATRIC" id="fig|300852.9.peg.227"/>
<dbReference type="eggNOG" id="COG1071">
    <property type="taxonomic scope" value="Bacteria"/>
</dbReference>
<dbReference type="HOGENOM" id="CLU_029393_1_0_0"/>
<dbReference type="PhylomeDB" id="Q5SLR4"/>
<dbReference type="EvolutionaryTrace" id="Q5SLR4"/>
<dbReference type="Proteomes" id="UP000000532">
    <property type="component" value="Chromosome"/>
</dbReference>
<dbReference type="GO" id="GO:0003863">
    <property type="term" value="F:3-methyl-2-oxobutanoate dehydrogenase (2-methylpropanoyl-transferring) activity"/>
    <property type="evidence" value="ECO:0007669"/>
    <property type="project" value="UniProtKB-EC"/>
</dbReference>
<dbReference type="GO" id="GO:0046872">
    <property type="term" value="F:metal ion binding"/>
    <property type="evidence" value="ECO:0007669"/>
    <property type="project" value="UniProtKB-KW"/>
</dbReference>
<dbReference type="GO" id="GO:0009083">
    <property type="term" value="P:branched-chain amino acid catabolic process"/>
    <property type="evidence" value="ECO:0007669"/>
    <property type="project" value="TreeGrafter"/>
</dbReference>
<dbReference type="CDD" id="cd02000">
    <property type="entry name" value="TPP_E1_PDC_ADC_BCADC"/>
    <property type="match status" value="1"/>
</dbReference>
<dbReference type="Gene3D" id="3.40.50.970">
    <property type="match status" value="1"/>
</dbReference>
<dbReference type="InterPro" id="IPR050771">
    <property type="entry name" value="Alpha-ketoacid_DH_E1_comp"/>
</dbReference>
<dbReference type="InterPro" id="IPR001017">
    <property type="entry name" value="DH_E1"/>
</dbReference>
<dbReference type="InterPro" id="IPR029061">
    <property type="entry name" value="THDP-binding"/>
</dbReference>
<dbReference type="PANTHER" id="PTHR43380">
    <property type="entry name" value="2-OXOISOVALERATE DEHYDROGENASE SUBUNIT ALPHA, MITOCHONDRIAL"/>
    <property type="match status" value="1"/>
</dbReference>
<dbReference type="PANTHER" id="PTHR43380:SF1">
    <property type="entry name" value="2-OXOISOVALERATE DEHYDROGENASE SUBUNIT ALPHA, MITOCHONDRIAL"/>
    <property type="match status" value="1"/>
</dbReference>
<dbReference type="Pfam" id="PF00676">
    <property type="entry name" value="E1_dh"/>
    <property type="match status" value="1"/>
</dbReference>
<dbReference type="SUPFAM" id="SSF52518">
    <property type="entry name" value="Thiamin diphosphate-binding fold (THDP-binding)"/>
    <property type="match status" value="1"/>
</dbReference>
<comment type="function">
    <text evidence="1">The branched-chain alpha-keto dehydrogenase complex catalyzes the overall conversion of alpha-keto acids to acyl-CoA and CO(2). It contains multiple copies of three enzymatic components: branched-chain alpha-keto acid decarboxylase (E1), lipoamide acyltransferase (E2) and lipoamide dehydrogenase (E3) (By similarity).</text>
</comment>
<comment type="catalytic activity">
    <reaction evidence="2">
        <text>N(6)-[(R)-lipoyl]-L-lysyl-[protein] + 3-methyl-2-oxobutanoate + H(+) = N(6)-[(R)-S(8)-2-methylpropanoyldihydrolipoyl]-L-lysyl-[protein] + CO2</text>
        <dbReference type="Rhea" id="RHEA:13457"/>
        <dbReference type="Rhea" id="RHEA-COMP:10474"/>
        <dbReference type="Rhea" id="RHEA-COMP:10497"/>
        <dbReference type="ChEBI" id="CHEBI:11851"/>
        <dbReference type="ChEBI" id="CHEBI:15378"/>
        <dbReference type="ChEBI" id="CHEBI:16526"/>
        <dbReference type="ChEBI" id="CHEBI:83099"/>
        <dbReference type="ChEBI" id="CHEBI:83142"/>
        <dbReference type="EC" id="1.2.4.4"/>
    </reaction>
</comment>
<comment type="cofactor">
    <cofactor evidence="2">
        <name>thiamine diphosphate</name>
        <dbReference type="ChEBI" id="CHEBI:58937"/>
    </cofactor>
</comment>
<comment type="subunit">
    <text evidence="2">Heterotetramer of two alpha and two beta chains. Directly associated with ODBB in the E1 complex.</text>
</comment>
<comment type="interaction">
    <interactant intactId="EBI-1038222">
        <id>Q5SLR4</id>
    </interactant>
    <interactant intactId="EBI-1038230">
        <id>Q5SLR3</id>
        <label>TTHA0230</label>
    </interactant>
    <organismsDiffer>false</organismsDiffer>
    <experiments>4</experiments>
</comment>
<comment type="similarity">
    <text evidence="3">Belongs to the BCKDHA family.</text>
</comment>
<feature type="chain" id="PRO_0000294975" description="2-oxoisovalerate dehydrogenase subunit alpha">
    <location>
        <begin position="1"/>
        <end position="367"/>
    </location>
</feature>
<feature type="binding site" evidence="2">
    <location>
        <position position="66"/>
    </location>
    <ligand>
        <name>substrate</name>
    </ligand>
</feature>
<feature type="binding site" evidence="2">
    <location>
        <begin position="94"/>
        <end position="96"/>
    </location>
    <ligand>
        <name>thiamine diphosphate</name>
        <dbReference type="ChEBI" id="CHEBI:58937"/>
    </ligand>
</feature>
<feature type="binding site" evidence="2">
    <location>
        <position position="95"/>
    </location>
    <ligand>
        <name>substrate</name>
    </ligand>
</feature>
<feature type="binding site" evidence="2">
    <location>
        <begin position="128"/>
        <end position="131"/>
    </location>
    <ligand>
        <name>substrate</name>
    </ligand>
</feature>
<feature type="binding site" evidence="2">
    <location>
        <begin position="144"/>
        <end position="146"/>
    </location>
    <ligand>
        <name>thiamine diphosphate</name>
        <dbReference type="ChEBI" id="CHEBI:58937"/>
    </ligand>
</feature>
<feature type="binding site" evidence="2">
    <location>
        <position position="144"/>
    </location>
    <ligand>
        <name>substrate</name>
    </ligand>
</feature>
<feature type="binding site" evidence="2">
    <location>
        <begin position="174"/>
        <end position="180"/>
    </location>
    <ligand>
        <name>thiamine diphosphate</name>
        <dbReference type="ChEBI" id="CHEBI:58937"/>
    </ligand>
</feature>
<feature type="binding site" evidence="2">
    <location>
        <position position="175"/>
    </location>
    <ligand>
        <name>Mg(2+)</name>
        <dbReference type="ChEBI" id="CHEBI:18420"/>
    </ligand>
</feature>
<feature type="binding site" evidence="2">
    <location>
        <begin position="204"/>
        <end position="208"/>
    </location>
    <ligand>
        <name>thiamine diphosphate</name>
        <dbReference type="ChEBI" id="CHEBI:58937"/>
    </ligand>
</feature>
<feature type="binding site" evidence="2">
    <location>
        <position position="204"/>
    </location>
    <ligand>
        <name>Mg(2+)</name>
        <dbReference type="ChEBI" id="CHEBI:18420"/>
    </ligand>
</feature>
<feature type="binding site" evidence="2">
    <location>
        <position position="206"/>
    </location>
    <ligand>
        <name>Mg(2+)</name>
        <dbReference type="ChEBI" id="CHEBI:18420"/>
    </ligand>
</feature>
<feature type="binding site" evidence="2">
    <location>
        <position position="273"/>
    </location>
    <ligand>
        <name>thiamine diphosphate</name>
        <dbReference type="ChEBI" id="CHEBI:58937"/>
    </ligand>
</feature>
<feature type="helix" evidence="6">
    <location>
        <begin position="35"/>
        <end position="60"/>
    </location>
</feature>
<feature type="helix" evidence="6">
    <location>
        <begin position="74"/>
        <end position="83"/>
    </location>
</feature>
<feature type="turn" evidence="6">
    <location>
        <begin position="86"/>
        <end position="88"/>
    </location>
</feature>
<feature type="strand" evidence="6">
    <location>
        <begin position="89"/>
        <end position="92"/>
    </location>
</feature>
<feature type="turn" evidence="6">
    <location>
        <begin position="95"/>
        <end position="97"/>
    </location>
</feature>
<feature type="helix" evidence="6">
    <location>
        <begin position="98"/>
        <end position="104"/>
    </location>
</feature>
<feature type="helix" evidence="6">
    <location>
        <begin position="108"/>
        <end position="116"/>
    </location>
</feature>
<feature type="turn" evidence="6">
    <location>
        <begin position="122"/>
        <end position="125"/>
    </location>
</feature>
<feature type="turn" evidence="6">
    <location>
        <begin position="135"/>
        <end position="138"/>
    </location>
</feature>
<feature type="turn" evidence="6">
    <location>
        <begin position="146"/>
        <end position="149"/>
    </location>
</feature>
<feature type="helix" evidence="6">
    <location>
        <begin position="150"/>
        <end position="162"/>
    </location>
</feature>
<feature type="strand" evidence="6">
    <location>
        <begin position="169"/>
        <end position="174"/>
    </location>
</feature>
<feature type="helix" evidence="6">
    <location>
        <begin position="176"/>
        <end position="179"/>
    </location>
</feature>
<feature type="helix" evidence="6">
    <location>
        <begin position="181"/>
        <end position="192"/>
    </location>
</feature>
<feature type="strand" evidence="6">
    <location>
        <begin position="196"/>
        <end position="203"/>
    </location>
</feature>
<feature type="strand" evidence="6">
    <location>
        <begin position="205"/>
        <end position="207"/>
    </location>
</feature>
<feature type="helix" evidence="6">
    <location>
        <begin position="212"/>
        <end position="215"/>
    </location>
</feature>
<feature type="strand" evidence="6">
    <location>
        <begin position="217"/>
        <end position="219"/>
    </location>
</feature>
<feature type="helix" evidence="6">
    <location>
        <begin position="222"/>
        <end position="227"/>
    </location>
</feature>
<feature type="strand" evidence="6">
    <location>
        <begin position="232"/>
        <end position="236"/>
    </location>
</feature>
<feature type="helix" evidence="6">
    <location>
        <begin position="240"/>
        <end position="255"/>
    </location>
</feature>
<feature type="strand" evidence="6">
    <location>
        <begin position="261"/>
        <end position="266"/>
    </location>
</feature>
<feature type="helix" evidence="6">
    <location>
        <begin position="279"/>
        <end position="281"/>
    </location>
</feature>
<feature type="helix" evidence="6">
    <location>
        <begin position="285"/>
        <end position="292"/>
    </location>
</feature>
<feature type="helix" evidence="6">
    <location>
        <begin position="296"/>
        <end position="305"/>
    </location>
</feature>
<feature type="turn" evidence="6">
    <location>
        <begin position="306"/>
        <end position="308"/>
    </location>
</feature>
<feature type="helix" evidence="6">
    <location>
        <begin position="312"/>
        <end position="335"/>
    </location>
</feature>
<feature type="helix" evidence="6">
    <location>
        <begin position="341"/>
        <end position="345"/>
    </location>
</feature>
<feature type="strand" evidence="6">
    <location>
        <begin position="348"/>
        <end position="351"/>
    </location>
</feature>
<feature type="helix" evidence="6">
    <location>
        <begin position="354"/>
        <end position="366"/>
    </location>
</feature>